<sequence length="44" mass="5361">MKRTYQPSKIRRQRKHGFRHRMSTKNGRRVLAARRRKGRKVLSA</sequence>
<keyword id="KW-0687">Ribonucleoprotein</keyword>
<keyword id="KW-0689">Ribosomal protein</keyword>
<protein>
    <recommendedName>
        <fullName evidence="1">Large ribosomal subunit protein bL34</fullName>
    </recommendedName>
    <alternativeName>
        <fullName evidence="3">50S ribosomal protein L34</fullName>
    </alternativeName>
</protein>
<organism>
    <name type="scientific">Streptococcus pyogenes serotype M6 (strain ATCC BAA-946 / MGAS10394)</name>
    <dbReference type="NCBI Taxonomy" id="286636"/>
    <lineage>
        <taxon>Bacteria</taxon>
        <taxon>Bacillati</taxon>
        <taxon>Bacillota</taxon>
        <taxon>Bacilli</taxon>
        <taxon>Lactobacillales</taxon>
        <taxon>Streptococcaceae</taxon>
        <taxon>Streptococcus</taxon>
    </lineage>
</organism>
<proteinExistence type="inferred from homology"/>
<name>RL34_STRP6</name>
<dbReference type="EMBL" id="CP000003">
    <property type="protein sequence ID" value="AAT86377.1"/>
    <property type="molecule type" value="Genomic_DNA"/>
</dbReference>
<dbReference type="RefSeq" id="WP_002885866.1">
    <property type="nucleotide sequence ID" value="NC_006086.1"/>
</dbReference>
<dbReference type="SMR" id="Q5XDY6"/>
<dbReference type="GeneID" id="93923177"/>
<dbReference type="KEGG" id="spa:M6_Spy0242"/>
<dbReference type="HOGENOM" id="CLU_129938_2_0_9"/>
<dbReference type="Proteomes" id="UP000001167">
    <property type="component" value="Chromosome"/>
</dbReference>
<dbReference type="GO" id="GO:1990904">
    <property type="term" value="C:ribonucleoprotein complex"/>
    <property type="evidence" value="ECO:0007669"/>
    <property type="project" value="UniProtKB-KW"/>
</dbReference>
<dbReference type="GO" id="GO:0005840">
    <property type="term" value="C:ribosome"/>
    <property type="evidence" value="ECO:0007669"/>
    <property type="project" value="UniProtKB-KW"/>
</dbReference>
<dbReference type="GO" id="GO:0003735">
    <property type="term" value="F:structural constituent of ribosome"/>
    <property type="evidence" value="ECO:0007669"/>
    <property type="project" value="InterPro"/>
</dbReference>
<dbReference type="GO" id="GO:0006412">
    <property type="term" value="P:translation"/>
    <property type="evidence" value="ECO:0007669"/>
    <property type="project" value="UniProtKB-UniRule"/>
</dbReference>
<dbReference type="FunFam" id="1.10.287.3980:FF:000001">
    <property type="entry name" value="Mitochondrial ribosomal protein L34"/>
    <property type="match status" value="1"/>
</dbReference>
<dbReference type="Gene3D" id="1.10.287.3980">
    <property type="match status" value="1"/>
</dbReference>
<dbReference type="HAMAP" id="MF_00391">
    <property type="entry name" value="Ribosomal_bL34"/>
    <property type="match status" value="1"/>
</dbReference>
<dbReference type="InterPro" id="IPR000271">
    <property type="entry name" value="Ribosomal_bL34"/>
</dbReference>
<dbReference type="InterPro" id="IPR020939">
    <property type="entry name" value="Ribosomal_bL34_CS"/>
</dbReference>
<dbReference type="NCBIfam" id="TIGR01030">
    <property type="entry name" value="rpmH_bact"/>
    <property type="match status" value="1"/>
</dbReference>
<dbReference type="PANTHER" id="PTHR14503:SF4">
    <property type="entry name" value="LARGE RIBOSOMAL SUBUNIT PROTEIN BL34M"/>
    <property type="match status" value="1"/>
</dbReference>
<dbReference type="PANTHER" id="PTHR14503">
    <property type="entry name" value="MITOCHONDRIAL RIBOSOMAL PROTEIN 34 FAMILY MEMBER"/>
    <property type="match status" value="1"/>
</dbReference>
<dbReference type="Pfam" id="PF00468">
    <property type="entry name" value="Ribosomal_L34"/>
    <property type="match status" value="1"/>
</dbReference>
<dbReference type="PROSITE" id="PS00784">
    <property type="entry name" value="RIBOSOMAL_L34"/>
    <property type="match status" value="1"/>
</dbReference>
<feature type="chain" id="PRO_0000187478" description="Large ribosomal subunit protein bL34">
    <location>
        <begin position="1"/>
        <end position="44"/>
    </location>
</feature>
<feature type="region of interest" description="Disordered" evidence="2">
    <location>
        <begin position="1"/>
        <end position="44"/>
    </location>
</feature>
<accession>Q5XDY6</accession>
<gene>
    <name evidence="1" type="primary">rpmH</name>
    <name type="ordered locus">M6_Spy0242</name>
</gene>
<reference key="1">
    <citation type="journal article" date="2004" name="J. Infect. Dis.">
        <title>Progress toward characterization of the group A Streptococcus metagenome: complete genome sequence of a macrolide-resistant serotype M6 strain.</title>
        <authorList>
            <person name="Banks D.J."/>
            <person name="Porcella S.F."/>
            <person name="Barbian K.D."/>
            <person name="Beres S.B."/>
            <person name="Philips L.E."/>
            <person name="Voyich J.M."/>
            <person name="DeLeo F.R."/>
            <person name="Martin J.M."/>
            <person name="Somerville G.A."/>
            <person name="Musser J.M."/>
        </authorList>
    </citation>
    <scope>NUCLEOTIDE SEQUENCE [LARGE SCALE GENOMIC DNA]</scope>
    <source>
        <strain>ATCC BAA-946 / MGAS10394</strain>
    </source>
</reference>
<evidence type="ECO:0000255" key="1">
    <source>
        <dbReference type="HAMAP-Rule" id="MF_00391"/>
    </source>
</evidence>
<evidence type="ECO:0000256" key="2">
    <source>
        <dbReference type="SAM" id="MobiDB-lite"/>
    </source>
</evidence>
<evidence type="ECO:0000305" key="3"/>
<comment type="similarity">
    <text evidence="1">Belongs to the bacterial ribosomal protein bL34 family.</text>
</comment>